<keyword id="KW-1015">Disulfide bond</keyword>
<keyword id="KW-0597">Phosphoprotein</keyword>
<keyword id="KW-1185">Reference proteome</keyword>
<keyword id="KW-0964">Secreted</keyword>
<keyword id="KW-0732">Signal</keyword>
<organism>
    <name type="scientific">Sus scrofa</name>
    <name type="common">Pig</name>
    <dbReference type="NCBI Taxonomy" id="9823"/>
    <lineage>
        <taxon>Eukaryota</taxon>
        <taxon>Metazoa</taxon>
        <taxon>Chordata</taxon>
        <taxon>Craniata</taxon>
        <taxon>Vertebrata</taxon>
        <taxon>Euteleostomi</taxon>
        <taxon>Mammalia</taxon>
        <taxon>Eutheria</taxon>
        <taxon>Laurasiatheria</taxon>
        <taxon>Artiodactyla</taxon>
        <taxon>Suina</taxon>
        <taxon>Suidae</taxon>
        <taxon>Sus</taxon>
    </lineage>
</organism>
<reference key="1">
    <citation type="journal article" date="2004" name="Matrix Biol.">
        <title>Characterization of the human secreted phosphoprotein 24 gene (SPP2) and comparison of the protein sequence in nine species.</title>
        <authorList>
            <person name="Bennett C.S."/>
            <person name="Khorram Khorshid H.R."/>
            <person name="Kitchen J.A."/>
            <person name="Arteta D."/>
            <person name="Dalgleish R."/>
        </authorList>
    </citation>
    <scope>NUCLEOTIDE SEQUENCE [MRNA]</scope>
</reference>
<name>SPP24_PIG</name>
<accession>Q711S8</accession>
<comment type="function">
    <text evidence="1">Could coordinate an aspect of bone turnover.</text>
</comment>
<comment type="subcellular location">
    <subcellularLocation>
        <location>Secreted</location>
    </subcellularLocation>
</comment>
<comment type="PTM">
    <text evidence="1">Multiply phosphorylated at serine residues.</text>
</comment>
<comment type="PTM">
    <text evidence="1">Phosphorylation sites are present in the extracellular medium.</text>
</comment>
<comment type="similarity">
    <text evidence="7">Belongs to the SPP2 family.</text>
</comment>
<proteinExistence type="evidence at transcript level"/>
<protein>
    <recommendedName>
        <fullName>Secreted phosphoprotein 24</fullName>
        <shortName>Spp-24</shortName>
    </recommendedName>
    <alternativeName>
        <fullName>Secreted phosphoprotein 2</fullName>
    </alternativeName>
</protein>
<evidence type="ECO:0000250" key="1"/>
<evidence type="ECO:0000250" key="2">
    <source>
        <dbReference type="UniProtKB" id="Q13103"/>
    </source>
</evidence>
<evidence type="ECO:0000250" key="3">
    <source>
        <dbReference type="UniProtKB" id="Q62740"/>
    </source>
</evidence>
<evidence type="ECO:0000250" key="4">
    <source>
        <dbReference type="UniProtKB" id="Q8K1I3"/>
    </source>
</evidence>
<evidence type="ECO:0000255" key="5"/>
<evidence type="ECO:0000256" key="6">
    <source>
        <dbReference type="SAM" id="MobiDB-lite"/>
    </source>
</evidence>
<evidence type="ECO:0000305" key="7"/>
<gene>
    <name type="primary">SPP2</name>
    <name type="synonym">SPP24</name>
</gene>
<dbReference type="EMBL" id="AJ308100">
    <property type="protein sequence ID" value="CAC87051.1"/>
    <property type="molecule type" value="mRNA"/>
</dbReference>
<dbReference type="RefSeq" id="NP_998945.1">
    <property type="nucleotide sequence ID" value="NM_213780.2"/>
</dbReference>
<dbReference type="SMR" id="Q711S8"/>
<dbReference type="FunCoup" id="Q711S8">
    <property type="interactions" value="430"/>
</dbReference>
<dbReference type="STRING" id="9823.ENSSSCP00000017287"/>
<dbReference type="PaxDb" id="9823-ENSSSCP00000023720"/>
<dbReference type="PeptideAtlas" id="Q711S8"/>
<dbReference type="GeneID" id="396669"/>
<dbReference type="KEGG" id="ssc:396669"/>
<dbReference type="CTD" id="6694"/>
<dbReference type="eggNOG" id="ENOG502S7TB">
    <property type="taxonomic scope" value="Eukaryota"/>
</dbReference>
<dbReference type="InParanoid" id="Q711S8"/>
<dbReference type="OrthoDB" id="9944258at2759"/>
<dbReference type="Proteomes" id="UP000008227">
    <property type="component" value="Unplaced"/>
</dbReference>
<dbReference type="Proteomes" id="UP000314985">
    <property type="component" value="Unplaced"/>
</dbReference>
<dbReference type="Proteomes" id="UP000694570">
    <property type="component" value="Unplaced"/>
</dbReference>
<dbReference type="Proteomes" id="UP000694571">
    <property type="component" value="Unplaced"/>
</dbReference>
<dbReference type="Proteomes" id="UP000694720">
    <property type="component" value="Unplaced"/>
</dbReference>
<dbReference type="Proteomes" id="UP000694722">
    <property type="component" value="Unplaced"/>
</dbReference>
<dbReference type="Proteomes" id="UP000694723">
    <property type="component" value="Unplaced"/>
</dbReference>
<dbReference type="Proteomes" id="UP000694724">
    <property type="component" value="Unplaced"/>
</dbReference>
<dbReference type="Proteomes" id="UP000694725">
    <property type="component" value="Unplaced"/>
</dbReference>
<dbReference type="Proteomes" id="UP000694726">
    <property type="component" value="Unplaced"/>
</dbReference>
<dbReference type="Proteomes" id="UP000694727">
    <property type="component" value="Unplaced"/>
</dbReference>
<dbReference type="Proteomes" id="UP000694728">
    <property type="component" value="Unplaced"/>
</dbReference>
<dbReference type="GO" id="GO:0005576">
    <property type="term" value="C:extracellular region"/>
    <property type="evidence" value="ECO:0007669"/>
    <property type="project" value="UniProtKB-SubCell"/>
</dbReference>
<dbReference type="GO" id="GO:0046849">
    <property type="term" value="P:bone remodeling"/>
    <property type="evidence" value="ECO:0007669"/>
    <property type="project" value="InterPro"/>
</dbReference>
<dbReference type="Gene3D" id="3.10.450.10">
    <property type="match status" value="1"/>
</dbReference>
<dbReference type="InterPro" id="IPR046350">
    <property type="entry name" value="Cystatin_sf"/>
</dbReference>
<dbReference type="InterPro" id="IPR010892">
    <property type="entry name" value="Spp-24"/>
</dbReference>
<dbReference type="PANTHER" id="PTHR15444">
    <property type="entry name" value="SECRETED PHOSPHOPROTEIN 24"/>
    <property type="match status" value="1"/>
</dbReference>
<dbReference type="PANTHER" id="PTHR15444:SF4">
    <property type="entry name" value="SECRETED PHOSPHOPROTEIN 24"/>
    <property type="match status" value="1"/>
</dbReference>
<dbReference type="Pfam" id="PF07448">
    <property type="entry name" value="Spp-24"/>
    <property type="match status" value="1"/>
</dbReference>
<dbReference type="SUPFAM" id="SSF54403">
    <property type="entry name" value="Cystatin/monellin"/>
    <property type="match status" value="1"/>
</dbReference>
<sequence length="204" mass="23097">MEKRAMRMLAMFVLGTSFWSCAGFPVYDYDPSSLREAVGASVAKVNSQSLSPYLFRAFRSSLKRVNVLGEDSLSMDIEFGIRETTCKRDSGEDPATCDFQRGYFTPSAICRSTVQISAEKVQDVWVRCRWSSSSESNSSEEMIFGDILGSSTSRNNYLRGLIPDVSRTEPLYERSLETMRRFPPPGNRSFPNQWPRARTNTGFE</sequence>
<feature type="signal peptide" evidence="5">
    <location>
        <begin position="1"/>
        <end position="23"/>
    </location>
</feature>
<feature type="chain" id="PRO_0000228609" description="Secreted phosphoprotein 24">
    <location>
        <begin position="24"/>
        <end position="204"/>
    </location>
</feature>
<feature type="region of interest" description="Disordered" evidence="6">
    <location>
        <begin position="179"/>
        <end position="204"/>
    </location>
</feature>
<feature type="modified residue" description="Phosphoserine" evidence="2">
    <location>
        <position position="90"/>
    </location>
</feature>
<feature type="modified residue" description="Phosphoserine" evidence="3">
    <location>
        <position position="138"/>
    </location>
</feature>
<feature type="modified residue" description="Phosphoserine" evidence="3">
    <location>
        <position position="139"/>
    </location>
</feature>
<feature type="modified residue" description="Phosphoserine" evidence="4">
    <location>
        <position position="166"/>
    </location>
</feature>
<feature type="modified residue" description="Phosphoserine" evidence="3">
    <location>
        <position position="175"/>
    </location>
</feature>
<feature type="disulfide bond" evidence="1">
    <location>
        <begin position="86"/>
        <end position="97"/>
    </location>
</feature>
<feature type="disulfide bond" evidence="1">
    <location>
        <begin position="110"/>
        <end position="128"/>
    </location>
</feature>